<organism>
    <name type="scientific">Halorhodospira halophila (strain DSM 244 / SL1)</name>
    <name type="common">Ectothiorhodospira halophila (strain DSM 244 / SL1)</name>
    <dbReference type="NCBI Taxonomy" id="349124"/>
    <lineage>
        <taxon>Bacteria</taxon>
        <taxon>Pseudomonadati</taxon>
        <taxon>Pseudomonadota</taxon>
        <taxon>Gammaproteobacteria</taxon>
        <taxon>Chromatiales</taxon>
        <taxon>Ectothiorhodospiraceae</taxon>
        <taxon>Halorhodospira</taxon>
    </lineage>
</organism>
<protein>
    <recommendedName>
        <fullName evidence="1">DNA repair protein RecO</fullName>
    </recommendedName>
    <alternativeName>
        <fullName evidence="1">Recombination protein O</fullName>
    </alternativeName>
</protein>
<feature type="chain" id="PRO_0000325200" description="DNA repair protein RecO">
    <location>
        <begin position="1"/>
        <end position="234"/>
    </location>
</feature>
<sequence length="234" mass="25968">MNGAQGQPAWVLHRRAFRESSTLVELFSQEYGRIGAVANGVRRRGWSGQLEPFIPLQVSWRGRGDLKTLTTVDQAGRGYALRGGALACGFYMAEVLLALTRREDPHPRTWERYAVAVDCLATDDAEPALRRFELALLEESGYGLELEQDVHGEPVVAQARYRYSPERGADRAGTGECGVEVSGATLLALAATEGQGLSEEPVRSEARRLMRAVIQQHLGGRRLRSREMFRSLRD</sequence>
<accession>A1WT15</accession>
<proteinExistence type="inferred from homology"/>
<evidence type="ECO:0000255" key="1">
    <source>
        <dbReference type="HAMAP-Rule" id="MF_00201"/>
    </source>
</evidence>
<dbReference type="EMBL" id="CP000544">
    <property type="protein sequence ID" value="ABM60827.1"/>
    <property type="molecule type" value="Genomic_DNA"/>
</dbReference>
<dbReference type="RefSeq" id="WP_011812850.1">
    <property type="nucleotide sequence ID" value="NC_008789.1"/>
</dbReference>
<dbReference type="SMR" id="A1WT15"/>
<dbReference type="STRING" id="349124.Hhal_0032"/>
<dbReference type="KEGG" id="hha:Hhal_0032"/>
<dbReference type="eggNOG" id="COG1381">
    <property type="taxonomic scope" value="Bacteria"/>
</dbReference>
<dbReference type="HOGENOM" id="CLU_066645_1_0_6"/>
<dbReference type="Proteomes" id="UP000000647">
    <property type="component" value="Chromosome"/>
</dbReference>
<dbReference type="GO" id="GO:0043590">
    <property type="term" value="C:bacterial nucleoid"/>
    <property type="evidence" value="ECO:0007669"/>
    <property type="project" value="TreeGrafter"/>
</dbReference>
<dbReference type="GO" id="GO:0006310">
    <property type="term" value="P:DNA recombination"/>
    <property type="evidence" value="ECO:0007669"/>
    <property type="project" value="UniProtKB-UniRule"/>
</dbReference>
<dbReference type="GO" id="GO:0006302">
    <property type="term" value="P:double-strand break repair"/>
    <property type="evidence" value="ECO:0007669"/>
    <property type="project" value="TreeGrafter"/>
</dbReference>
<dbReference type="Gene3D" id="2.40.50.140">
    <property type="entry name" value="Nucleic acid-binding proteins"/>
    <property type="match status" value="1"/>
</dbReference>
<dbReference type="Gene3D" id="1.20.1440.120">
    <property type="entry name" value="Recombination protein O, C-terminal domain"/>
    <property type="match status" value="1"/>
</dbReference>
<dbReference type="HAMAP" id="MF_00201">
    <property type="entry name" value="RecO"/>
    <property type="match status" value="1"/>
</dbReference>
<dbReference type="InterPro" id="IPR037278">
    <property type="entry name" value="ARFGAP/RecO"/>
</dbReference>
<dbReference type="InterPro" id="IPR022572">
    <property type="entry name" value="DNA_rep/recomb_RecO_N"/>
</dbReference>
<dbReference type="InterPro" id="IPR012340">
    <property type="entry name" value="NA-bd_OB-fold"/>
</dbReference>
<dbReference type="InterPro" id="IPR003717">
    <property type="entry name" value="RecO"/>
</dbReference>
<dbReference type="InterPro" id="IPR042242">
    <property type="entry name" value="RecO_C"/>
</dbReference>
<dbReference type="NCBIfam" id="TIGR00613">
    <property type="entry name" value="reco"/>
    <property type="match status" value="1"/>
</dbReference>
<dbReference type="PANTHER" id="PTHR33991">
    <property type="entry name" value="DNA REPAIR PROTEIN RECO"/>
    <property type="match status" value="1"/>
</dbReference>
<dbReference type="PANTHER" id="PTHR33991:SF1">
    <property type="entry name" value="DNA REPAIR PROTEIN RECO"/>
    <property type="match status" value="1"/>
</dbReference>
<dbReference type="Pfam" id="PF02565">
    <property type="entry name" value="RecO_C"/>
    <property type="match status" value="1"/>
</dbReference>
<dbReference type="Pfam" id="PF11967">
    <property type="entry name" value="RecO_N"/>
    <property type="match status" value="1"/>
</dbReference>
<dbReference type="SUPFAM" id="SSF57863">
    <property type="entry name" value="ArfGap/RecO-like zinc finger"/>
    <property type="match status" value="1"/>
</dbReference>
<dbReference type="SUPFAM" id="SSF50249">
    <property type="entry name" value="Nucleic acid-binding proteins"/>
    <property type="match status" value="1"/>
</dbReference>
<reference key="1">
    <citation type="submission" date="2006-12" db="EMBL/GenBank/DDBJ databases">
        <title>Complete sequence of Halorhodospira halophila SL1.</title>
        <authorList>
            <consortium name="US DOE Joint Genome Institute"/>
            <person name="Copeland A."/>
            <person name="Lucas S."/>
            <person name="Lapidus A."/>
            <person name="Barry K."/>
            <person name="Detter J.C."/>
            <person name="Glavina del Rio T."/>
            <person name="Hammon N."/>
            <person name="Israni S."/>
            <person name="Dalin E."/>
            <person name="Tice H."/>
            <person name="Pitluck S."/>
            <person name="Saunders E."/>
            <person name="Brettin T."/>
            <person name="Bruce D."/>
            <person name="Han C."/>
            <person name="Tapia R."/>
            <person name="Schmutz J."/>
            <person name="Larimer F."/>
            <person name="Land M."/>
            <person name="Hauser L."/>
            <person name="Kyrpides N."/>
            <person name="Mikhailova N."/>
            <person name="Hoff W."/>
            <person name="Richardson P."/>
        </authorList>
    </citation>
    <scope>NUCLEOTIDE SEQUENCE [LARGE SCALE GENOMIC DNA]</scope>
    <source>
        <strain>DSM 244 / SL1</strain>
    </source>
</reference>
<keyword id="KW-0227">DNA damage</keyword>
<keyword id="KW-0233">DNA recombination</keyword>
<keyword id="KW-0234">DNA repair</keyword>
<keyword id="KW-1185">Reference proteome</keyword>
<name>RECO_HALHL</name>
<gene>
    <name evidence="1" type="primary">recO</name>
    <name type="ordered locus">Hhal_0032</name>
</gene>
<comment type="function">
    <text evidence="1">Involved in DNA repair and RecF pathway recombination.</text>
</comment>
<comment type="similarity">
    <text evidence="1">Belongs to the RecO family.</text>
</comment>